<name>KR2_EBVB9</name>
<dbReference type="EC" id="2.7.11.1" evidence="12"/>
<dbReference type="EMBL" id="V01555">
    <property type="protein sequence ID" value="CAA24828.1"/>
    <property type="status" value="ALT_INIT"/>
    <property type="molecule type" value="Genomic_DNA"/>
</dbReference>
<dbReference type="EMBL" id="AJ507799">
    <property type="protein sequence ID" value="CAD53438.2"/>
    <property type="molecule type" value="Genomic_DNA"/>
</dbReference>
<dbReference type="PIR" id="S33033">
    <property type="entry name" value="S33033"/>
</dbReference>
<dbReference type="RefSeq" id="YP_401688.1">
    <property type="nucleotide sequence ID" value="NC_007605.1"/>
</dbReference>
<dbReference type="BioGRID" id="971746">
    <property type="interactions" value="9"/>
</dbReference>
<dbReference type="IntAct" id="P13288">
    <property type="interactions" value="3"/>
</dbReference>
<dbReference type="MINT" id="P13288"/>
<dbReference type="iPTMnet" id="P13288"/>
<dbReference type="DNASU" id="3783704"/>
<dbReference type="GeneID" id="3783704"/>
<dbReference type="KEGG" id="vg:3783704"/>
<dbReference type="SIGNOR" id="P13288"/>
<dbReference type="Proteomes" id="UP000153037">
    <property type="component" value="Segment"/>
</dbReference>
<dbReference type="GO" id="GO:0044199">
    <property type="term" value="C:host cell nuclear envelope"/>
    <property type="evidence" value="ECO:0000314"/>
    <property type="project" value="CACAO"/>
</dbReference>
<dbReference type="GO" id="GO:0042025">
    <property type="term" value="C:host cell nucleus"/>
    <property type="evidence" value="ECO:0000315"/>
    <property type="project" value="CACAO"/>
</dbReference>
<dbReference type="GO" id="GO:0019033">
    <property type="term" value="C:viral tegument"/>
    <property type="evidence" value="ECO:0007669"/>
    <property type="project" value="UniProtKB-SubCell"/>
</dbReference>
<dbReference type="GO" id="GO:0005524">
    <property type="term" value="F:ATP binding"/>
    <property type="evidence" value="ECO:0007669"/>
    <property type="project" value="UniProtKB-KW"/>
</dbReference>
<dbReference type="GO" id="GO:0106310">
    <property type="term" value="F:protein serine kinase activity"/>
    <property type="evidence" value="ECO:0007669"/>
    <property type="project" value="RHEA"/>
</dbReference>
<dbReference type="GO" id="GO:0004674">
    <property type="term" value="F:protein serine/threonine kinase activity"/>
    <property type="evidence" value="ECO:0007669"/>
    <property type="project" value="UniProtKB-KW"/>
</dbReference>
<dbReference type="GO" id="GO:0039525">
    <property type="term" value="P:symbiont-mediated perturbation of host chromatin organization"/>
    <property type="evidence" value="ECO:0007669"/>
    <property type="project" value="UniProtKB-KW"/>
</dbReference>
<dbReference type="GO" id="GO:0039548">
    <property type="term" value="P:symbiont-mediated suppression of host cytoplasmic pattern recognition receptor signaling pathway via inhibition of IRF3 activity"/>
    <property type="evidence" value="ECO:0007669"/>
    <property type="project" value="UniProtKB-KW"/>
</dbReference>
<dbReference type="FunFam" id="1.10.510.10:FF:001645">
    <property type="entry name" value="Serine/threonine-protein kinase BGLF4"/>
    <property type="match status" value="1"/>
</dbReference>
<dbReference type="Gene3D" id="1.10.510.10">
    <property type="entry name" value="Transferase(Phosphotransferase) domain 1"/>
    <property type="match status" value="1"/>
</dbReference>
<dbReference type="InterPro" id="IPR011009">
    <property type="entry name" value="Kinase-like_dom_sf"/>
</dbReference>
<dbReference type="InterPro" id="IPR000719">
    <property type="entry name" value="Prot_kinase_dom"/>
</dbReference>
<dbReference type="InterPro" id="IPR008266">
    <property type="entry name" value="Tyr_kinase_AS"/>
</dbReference>
<dbReference type="SMART" id="SM00220">
    <property type="entry name" value="S_TKc"/>
    <property type="match status" value="1"/>
</dbReference>
<dbReference type="SUPFAM" id="SSF56112">
    <property type="entry name" value="Protein kinase-like (PK-like)"/>
    <property type="match status" value="1"/>
</dbReference>
<dbReference type="PROSITE" id="PS50011">
    <property type="entry name" value="PROTEIN_KINASE_DOM"/>
    <property type="match status" value="1"/>
</dbReference>
<dbReference type="PROSITE" id="PS00109">
    <property type="entry name" value="PROTEIN_KINASE_TYR"/>
    <property type="match status" value="1"/>
</dbReference>
<evidence type="ECO:0000255" key="1">
    <source>
        <dbReference type="PROSITE-ProRule" id="PRU00159"/>
    </source>
</evidence>
<evidence type="ECO:0000255" key="2">
    <source>
        <dbReference type="PROSITE-ProRule" id="PRU10028"/>
    </source>
</evidence>
<evidence type="ECO:0000256" key="3">
    <source>
        <dbReference type="SAM" id="MobiDB-lite"/>
    </source>
</evidence>
<evidence type="ECO:0000269" key="4">
    <source>
    </source>
</evidence>
<evidence type="ECO:0000269" key="5">
    <source>
    </source>
</evidence>
<evidence type="ECO:0000269" key="6">
    <source>
    </source>
</evidence>
<evidence type="ECO:0000269" key="7">
    <source>
    </source>
</evidence>
<evidence type="ECO:0000269" key="8">
    <source>
    </source>
</evidence>
<evidence type="ECO:0000269" key="9">
    <source>
    </source>
</evidence>
<evidence type="ECO:0000269" key="10">
    <source>
    </source>
</evidence>
<evidence type="ECO:0000269" key="11">
    <source>
    </source>
</evidence>
<evidence type="ECO:0000269" key="12">
    <source>
    </source>
</evidence>
<evidence type="ECO:0000305" key="13"/>
<keyword id="KW-0067">ATP-binding</keyword>
<keyword id="KW-0244">Early protein</keyword>
<keyword id="KW-1048">Host nucleus</keyword>
<keyword id="KW-0945">Host-virus interaction</keyword>
<keyword id="KW-1090">Inhibition of host innate immune response by virus</keyword>
<keyword id="KW-1092">Inhibition of host IRF3 by virus</keyword>
<keyword id="KW-1113">Inhibition of host RLR pathway by virus</keyword>
<keyword id="KW-0418">Kinase</keyword>
<keyword id="KW-1122">Modulation of host chromatin by virus</keyword>
<keyword id="KW-0547">Nucleotide-binding</keyword>
<keyword id="KW-1185">Reference proteome</keyword>
<keyword id="KW-0723">Serine/threonine-protein kinase</keyword>
<keyword id="KW-0808">Transferase</keyword>
<keyword id="KW-0899">Viral immunoevasion</keyword>
<keyword id="KW-0946">Virion</keyword>
<keyword id="KW-0920">Virion tegument</keyword>
<accession>P13288</accession>
<accession>Q777D1</accession>
<protein>
    <recommendedName>
        <fullName>Serine/threonine-protein kinase BGLF4</fullName>
        <ecNumber evidence="12">2.7.11.1</ecNumber>
    </recommendedName>
</protein>
<organismHost>
    <name type="scientific">Homo sapiens</name>
    <name type="common">Human</name>
    <dbReference type="NCBI Taxonomy" id="9606"/>
</organismHost>
<reference key="1">
    <citation type="journal article" date="1984" name="Nature">
        <title>DNA sequence and expression of the B95-8 Epstein-Barr virus genome.</title>
        <authorList>
            <person name="Baer R."/>
            <person name="Bankier A.T."/>
            <person name="Biggin M.D."/>
            <person name="Deininger P.L."/>
            <person name="Farrell P.J."/>
            <person name="Gibson T.J."/>
            <person name="Hatfull G."/>
            <person name="Hudson G.S."/>
            <person name="Satchwell S.C."/>
            <person name="Seguin C."/>
            <person name="Tuffnell P.S."/>
            <person name="Barrell B.G."/>
        </authorList>
    </citation>
    <scope>NUCLEOTIDE SEQUENCE [LARGE SCALE GENOMIC DNA]</scope>
</reference>
<reference key="2">
    <citation type="journal article" date="2003" name="Virology">
        <title>Updated Epstein-Barr virus (EBV) DNA sequence and analysis of a promoter for the BART (CST, BARF0) RNAs of EBV.</title>
        <authorList>
            <person name="de Jesus O."/>
            <person name="Smith P.R."/>
            <person name="Spender L.C."/>
            <person name="Elgueta Karstegl C."/>
            <person name="Niller H.H."/>
            <person name="Huang D."/>
            <person name="Farrell P.J."/>
        </authorList>
    </citation>
    <scope>GENOME REANNOTATION</scope>
</reference>
<reference key="3">
    <citation type="journal article" date="1989" name="J. Virol.">
        <title>Identification of new protein kinase-related genes in three herpesviruses, herpes simplex virus, varicella-zoster virus, and Epstein-Barr virus.</title>
        <authorList>
            <person name="Smith R.F."/>
            <person name="Smith T.F."/>
        </authorList>
    </citation>
    <scope>CHARACTERIZATION</scope>
</reference>
<reference key="4">
    <citation type="journal article" date="2004" name="Proc. Natl. Acad. Sci. U.S.A.">
        <title>Proteins of purified Epstein-Barr virus.</title>
        <authorList>
            <person name="Johannsen E."/>
            <person name="Luftig M."/>
            <person name="Chase M.R."/>
            <person name="Weicksel S."/>
            <person name="Cahir-McFarland E."/>
            <person name="Illanes D."/>
            <person name="Sarracino D."/>
            <person name="Kieff E."/>
        </authorList>
    </citation>
    <scope>SUBCELLULAR LOCATION</scope>
</reference>
<reference key="5">
    <citation type="journal article" date="2005" name="J. Gen. Virol.">
        <title>Detection of Epstein-Barr virus BGLF4 protein kinase in virus replication compartments and virus particles.</title>
        <authorList>
            <person name="Wang J.T."/>
            <person name="Yang P.W."/>
            <person name="Lee C.P."/>
            <person name="Han C.H."/>
            <person name="Tsai C.H."/>
            <person name="Chen M.R."/>
        </authorList>
    </citation>
    <scope>SUBCELLULAR LOCATION</scope>
</reference>
<reference key="6">
    <citation type="journal article" date="2006" name="J. Virol.">
        <title>Epstein-Barr virus protein kinase BGLF4 is a virion tegument protein that dissociates from virions in a phosphorylation-dependent process and phosphorylates the viral immediate-early protein BZLF1.</title>
        <authorList>
            <person name="Asai R."/>
            <person name="Kato A."/>
            <person name="Kato K."/>
            <person name="Kanamori-Koyama M."/>
            <person name="Sugimoto K."/>
            <person name="Sairenji T."/>
            <person name="Nishiyama Y."/>
            <person name="Kawaguchi Y."/>
        </authorList>
    </citation>
    <scope>FUNCTION</scope>
</reference>
<reference key="7">
    <citation type="journal article" date="2007" name="J. Virol.">
        <title>Epstein-Barr virus BGLF4 kinase induces premature chromosome condensation through activation of condensin and topoisomerase II.</title>
        <authorList>
            <person name="Lee C.P."/>
            <person name="Chen J.Y."/>
            <person name="Wang J.T."/>
            <person name="Kimura K."/>
            <person name="Takemoto A."/>
            <person name="Lu C.C."/>
            <person name="Chen M.R."/>
        </authorList>
    </citation>
    <scope>FUNCTION</scope>
</reference>
<reference key="8">
    <citation type="journal article" date="2007" name="J. Virol.">
        <title>Epstein-Barr virus-encoded protein kinase (BGLF4) is involved in production of infectious virus.</title>
        <authorList>
            <person name="Gershburg E."/>
            <person name="Raffa S."/>
            <person name="Torrisi M.R."/>
            <person name="Pagano J.S."/>
        </authorList>
    </citation>
    <scope>FUNCTION</scope>
</reference>
<reference key="9">
    <citation type="journal article" date="2008" name="J. Virol.">
        <title>Epstein-Barr virus BGLF4 kinase induces disassembly of the nuclear lamina to facilitate virion production.</title>
        <authorList>
            <person name="Lee C.P."/>
            <person name="Huang Y.H."/>
            <person name="Lin S.F."/>
            <person name="Chang Y."/>
            <person name="Chang Y.H."/>
            <person name="Takada K."/>
            <person name="Chen M.R."/>
        </authorList>
    </citation>
    <scope>FUNCTION</scope>
</reference>
<reference key="10">
    <citation type="journal article" date="2009" name="J. Virol.">
        <title>Protein array identification of substrates of the epstein-barr virus protein kinase BGLF4.</title>
        <authorList>
            <person name="Zhu J."/>
            <person name="Liao G."/>
            <person name="Shan L."/>
            <person name="Zhang J."/>
            <person name="Chen M.R."/>
            <person name="Hayward G.S."/>
            <person name="Hayward S.D."/>
            <person name="Desai P."/>
            <person name="Zhu H."/>
        </authorList>
    </citation>
    <scope>FUNCTION</scope>
</reference>
<reference key="11">
    <citation type="journal article" date="2012" name="J. Virol.">
        <title>Epstein-Barr virus protein kinase BGLF4 targets the nucleus through interaction with nucleoporins.</title>
        <authorList>
            <person name="Chang C.W."/>
            <person name="Lee C.P."/>
            <person name="Huang Y.H."/>
            <person name="Yang P.W."/>
            <person name="Wang J.T."/>
            <person name="Chen M.R."/>
        </authorList>
    </citation>
    <scope>FUNCTION</scope>
    <scope>SUBCELLULAR LOCATION</scope>
    <scope>INTERACTION WITH HOST NUP62 AND NUP153</scope>
</reference>
<reference key="12">
    <citation type="journal article" date="2012" name="J. Virol.">
        <title>SUMO binding by the Epstein-Barr virus protein kinase BGLF4 is crucial for BGLF4 function.</title>
        <authorList>
            <person name="Li R."/>
            <person name="Wang L."/>
            <person name="Liao G."/>
            <person name="Guzzo C.M."/>
            <person name="Matunis M.J."/>
            <person name="Zhu H."/>
            <person name="Hayward S.D."/>
        </authorList>
    </citation>
    <scope>FUNCTION</scope>
    <scope>INTERACTION WITH HOST SUMO1 AND SUMO2</scope>
    <scope>REGION</scope>
    <scope>SUBCELLULAR LOCATION</scope>
</reference>
<reference key="13">
    <citation type="journal article" date="2015" name="J. Virol.">
        <title>BGLF4 kinase modulates the structure and transport preference of the nuclear pore complex to facilitate nuclear import of Epstein-Barr virus lytic proteins.</title>
        <authorList>
            <person name="Chang C.W."/>
            <person name="Lee C.P."/>
            <person name="Su M.T."/>
            <person name="Tsai C.H."/>
            <person name="Chen M.R."/>
        </authorList>
    </citation>
    <scope>FUNCTION</scope>
</reference>
<reference key="14">
    <citation type="journal article" date="2019" name="Cell Rep.">
        <title>Conserved Herpesvirus Protein Kinases Target SAMHD1 to Facilitate Virus Replication.</title>
        <authorList>
            <person name="Zhang K."/>
            <person name="Lv D.W."/>
            <person name="Li R."/>
        </authorList>
    </citation>
    <scope>FUNCTION</scope>
    <scope>CATALYTIC ACTIVITY</scope>
</reference>
<organism>
    <name type="scientific">Epstein-Barr virus (strain B95-8)</name>
    <name type="common">HHV-4</name>
    <name type="synonym">Human herpesvirus 4</name>
    <dbReference type="NCBI Taxonomy" id="10377"/>
    <lineage>
        <taxon>Viruses</taxon>
        <taxon>Duplodnaviria</taxon>
        <taxon>Heunggongvirae</taxon>
        <taxon>Peploviricota</taxon>
        <taxon>Herviviricetes</taxon>
        <taxon>Herpesvirales</taxon>
        <taxon>Orthoherpesviridae</taxon>
        <taxon>Gammaherpesvirinae</taxon>
        <taxon>Lymphocryptovirus</taxon>
        <taxon>Lymphocryptovirus humangamma4</taxon>
        <taxon>Epstein-Barr virus (strain GD1)</taxon>
    </lineage>
</organism>
<feature type="chain" id="PRO_0000086184" description="Serine/threonine-protein kinase BGLF4">
    <location>
        <begin position="1"/>
        <end position="429"/>
    </location>
</feature>
<feature type="domain" description="Protein kinase" evidence="1">
    <location>
        <begin position="1"/>
        <end position="409"/>
    </location>
</feature>
<feature type="region of interest" description="Disordered" evidence="3">
    <location>
        <begin position="1"/>
        <end position="27"/>
    </location>
</feature>
<feature type="region of interest" description="SUMO interaction motif" evidence="9">
    <location>
        <begin position="36"/>
        <end position="40"/>
    </location>
</feature>
<feature type="region of interest" description="SUMO interaction motif" evidence="9">
    <location>
        <begin position="344"/>
        <end position="350"/>
    </location>
</feature>
<feature type="compositionally biased region" description="Low complexity" evidence="3">
    <location>
        <begin position="14"/>
        <end position="23"/>
    </location>
</feature>
<feature type="active site" description="Proton acceptor" evidence="1 2">
    <location>
        <position position="195"/>
    </location>
</feature>
<feature type="binding site" evidence="1">
    <location>
        <begin position="110"/>
        <end position="118"/>
    </location>
    <ligand>
        <name>ATP</name>
        <dbReference type="ChEBI" id="CHEBI:30616"/>
    </ligand>
</feature>
<feature type="binding site" evidence="1">
    <location>
        <position position="128"/>
    </location>
    <ligand>
        <name>ATP</name>
        <dbReference type="ChEBI" id="CHEBI:30616"/>
    </ligand>
</feature>
<comment type="function">
    <text evidence="4 5 6 7 8 9 10 11 12">Plays many key roles by phosphorylating several proteins including the viral DNA processivity factor BMRF1, EBNA1 or EBNA2. Modifies the host nuclear envelope structure and induces the redistribution of nuclear envelope-associated proteins by phosphorylating host nucleoporins. Subsequently, promotes the nuclear transport of EBV lytic proteins. Required for efficient lytic DNA replication and release of nucleocapsids from the nucleus. Contributes to the compaction of host cell chromatin in cells undergoing lytic replication, presumably by phosphorylating the host condensin complex and host TOP2A. Induces disassembly of the nuclear lamina by phosphorylating with host LMNA. Phosphorylates substrates involved in capsid assembly and DNA packaging. Facilitates the switch from latent to lytic DNA replication by down-regulating EBNA1 replication function. Phosphorylates the viral immediate-early protein BZLF1 and inhibits its sumoylation by interacting with host SUMO1 and SUMO2. Phosphorylates also host SAMHD1 and thereby counteracts its antiviral effect by reducing its dNTP hydrolase activity.</text>
</comment>
<comment type="catalytic activity">
    <reaction evidence="12">
        <text>L-seryl-[protein] + ATP = O-phospho-L-seryl-[protein] + ADP + H(+)</text>
        <dbReference type="Rhea" id="RHEA:17989"/>
        <dbReference type="Rhea" id="RHEA-COMP:9863"/>
        <dbReference type="Rhea" id="RHEA-COMP:11604"/>
        <dbReference type="ChEBI" id="CHEBI:15378"/>
        <dbReference type="ChEBI" id="CHEBI:29999"/>
        <dbReference type="ChEBI" id="CHEBI:30616"/>
        <dbReference type="ChEBI" id="CHEBI:83421"/>
        <dbReference type="ChEBI" id="CHEBI:456216"/>
        <dbReference type="EC" id="2.7.11.1"/>
    </reaction>
</comment>
<comment type="catalytic activity">
    <reaction evidence="12">
        <text>L-threonyl-[protein] + ATP = O-phospho-L-threonyl-[protein] + ADP + H(+)</text>
        <dbReference type="Rhea" id="RHEA:46608"/>
        <dbReference type="Rhea" id="RHEA-COMP:11060"/>
        <dbReference type="Rhea" id="RHEA-COMP:11605"/>
        <dbReference type="ChEBI" id="CHEBI:15378"/>
        <dbReference type="ChEBI" id="CHEBI:30013"/>
        <dbReference type="ChEBI" id="CHEBI:30616"/>
        <dbReference type="ChEBI" id="CHEBI:61977"/>
        <dbReference type="ChEBI" id="CHEBI:456216"/>
        <dbReference type="EC" id="2.7.11.1"/>
    </reaction>
</comment>
<comment type="subunit">
    <text evidence="9 10">Interacts with host NUP62 and NUP153; this interaction plays a role in nuclear targeting of BGLF4. Interacts with host SUMO1 and SUMO2.</text>
</comment>
<comment type="interaction">
    <interactant intactId="EBI-1630636">
        <id>P13288</id>
    </interactant>
    <interactant intactId="EBI-372610">
        <id>Q01831</id>
        <label>XPC</label>
    </interactant>
    <organismsDiffer>true</organismsDiffer>
    <experiments>9</experiments>
</comment>
<comment type="subcellular location">
    <subcellularLocation>
        <location>Virion tegument</location>
    </subcellularLocation>
    <subcellularLocation>
        <location evidence="9 10">Host nucleus</location>
    </subcellularLocation>
    <text>the protein is present at discrete sites in nuclei, called replication compartments where viral DNA replication occurs.</text>
</comment>
<comment type="similarity">
    <text evidence="1">Belongs to the protein kinase superfamily. Ser/Thr protein kinase family.</text>
</comment>
<comment type="sequence caution" evidence="13">
    <conflict type="erroneous initiation">
        <sequence resource="EMBL-CDS" id="CAA24828"/>
    </conflict>
</comment>
<sequence length="429" mass="48351">MDVNMAAELSPTNSSSSGELSVSPEPPRETQAFLGKVTVIDYFTFQHKHLKVTNIDDMTETLYVKLPENMTRCDHLPITCEYLLGRGSYGAVYAHADNATVKLYDSVTELYHELMVCDMIQIGKATAEDGQDKALVDYLSACTSCHALFMPQFRCSLQDYGHWHDGSIEPLVRGFQGLKDAVYFLNRHCGLFHSDISPSNILVDFTDTMWGMGRLVLTDYGTASLHDRNKMLDVRLKSSKGRQLYRLYCQREPFSIAKDTYKPLCLLSKCYILRGAGHIPDPSACGPVGAQTALRLDLQSLGYSLLYGIMHLADSTHKIPYPNPDMGFDRSDPLYFLQFAAPKVVLLEVLSQMWNLNLDMGLTSCGESPCVDVTAEHMSQFLQWCRSLKKRFKESYFFNCRPRFEHPHLPGLVAELLADDFFGPDGRRG</sequence>
<gene>
    <name type="ORF">BGLF4</name>
</gene>
<proteinExistence type="evidence at protein level"/>